<protein>
    <recommendedName>
        <fullName>Peptide-N(4)-(N-acetyl-beta-glucosaminyl)asparagine amidase</fullName>
        <shortName>PNGase</shortName>
        <shortName>hPNGase</shortName>
        <ecNumber>3.5.1.52</ecNumber>
    </recommendedName>
    <alternativeName>
        <fullName>N-glycanase 1</fullName>
    </alternativeName>
    <alternativeName>
        <fullName>Peptide:N-glycanase</fullName>
    </alternativeName>
</protein>
<accession>Q96IV0</accession>
<accession>B4DJE9</accession>
<accession>Q59FB1</accession>
<accession>Q6PJD8</accession>
<accession>Q9BVR8</accession>
<accession>Q9NR70</accession>
<sequence>MAAAALGSSSGSASPAVAELCQNTPETFLEASKLLLTYADNILRNPNDEKYRSIRIGNTAFSTRLLPVRGAVECLFEMGFEEGETHLIFPKKASVEQLQKIRDLIAIERSSRLDGSNKSHKVKSSQQPAASTQLPTTPSSNPSGLNQHTRNRQGQSSDPPSASTVAADSAILEVLQSNIQHVLVYENPALQEKALACIPVQELKRKSQEKLSRARKLDKGINISDEDFLLLELLHWFKEEFFHWVNNVLCSKCGGQTRSRDRSLLPSDDELKWGAKEVEDHYCDACQFSNRFPRYNNPEKLLETRCGRCGEWANCFTLCCRAVGFEARYVWDYTDHVWTEVYSPSQQRWLHCDACEDVCDKPLLYEIGWGKKLSYVIAFSKDEVVDVTWRYSCKHEEVIARRTKVKEALLRDTINGLNKQRQLFLSENRRKELLQRIIVELVEFISPKTPKPGELGGRISGSVAWRVARGEMGLQRKETLFIPCENEKISKQLHLCYNIVKDRYVRVSNNNQTISGWENGVWKMESIFRKVETDWHMVYLARKEGSSFAYISWKFECGSVGLKVDSISIRTSSQTFQTGTVEWKLRSDTAQVELTGDNSLHSYADFSGATEVILEAELSRGDGDVAWQHTQLFRQSLNDHEENCLEIIIKFSDL</sequence>
<organism>
    <name type="scientific">Homo sapiens</name>
    <name type="common">Human</name>
    <dbReference type="NCBI Taxonomy" id="9606"/>
    <lineage>
        <taxon>Eukaryota</taxon>
        <taxon>Metazoa</taxon>
        <taxon>Chordata</taxon>
        <taxon>Craniata</taxon>
        <taxon>Vertebrata</taxon>
        <taxon>Euteleostomi</taxon>
        <taxon>Mammalia</taxon>
        <taxon>Eutheria</taxon>
        <taxon>Euarchontoglires</taxon>
        <taxon>Primates</taxon>
        <taxon>Haplorrhini</taxon>
        <taxon>Catarrhini</taxon>
        <taxon>Hominidae</taxon>
        <taxon>Homo</taxon>
    </lineage>
</organism>
<dbReference type="EC" id="3.5.1.52"/>
<dbReference type="EMBL" id="AF250924">
    <property type="protein sequence ID" value="AAF74720.2"/>
    <property type="molecule type" value="mRNA"/>
</dbReference>
<dbReference type="EMBL" id="AK296047">
    <property type="protein sequence ID" value="BAG58811.1"/>
    <property type="molecule type" value="mRNA"/>
</dbReference>
<dbReference type="EMBL" id="AB209549">
    <property type="protein sequence ID" value="BAD92786.1"/>
    <property type="status" value="ALT_INIT"/>
    <property type="molecule type" value="mRNA"/>
</dbReference>
<dbReference type="EMBL" id="AC092798">
    <property type="status" value="NOT_ANNOTATED_CDS"/>
    <property type="molecule type" value="Genomic_DNA"/>
</dbReference>
<dbReference type="EMBL" id="BC000963">
    <property type="protein sequence ID" value="AAH00963.1"/>
    <property type="molecule type" value="mRNA"/>
</dbReference>
<dbReference type="EMBL" id="BC007226">
    <property type="protein sequence ID" value="AAH07226.1"/>
    <property type="molecule type" value="mRNA"/>
</dbReference>
<dbReference type="EMBL" id="BC017220">
    <property type="protein sequence ID" value="AAH17220.1"/>
    <property type="status" value="ALT_SEQ"/>
    <property type="molecule type" value="mRNA"/>
</dbReference>
<dbReference type="CCDS" id="CCDS33719.1">
    <molecule id="Q96IV0-1"/>
</dbReference>
<dbReference type="CCDS" id="CCDS46777.1">
    <molecule id="Q96IV0-5"/>
</dbReference>
<dbReference type="CCDS" id="CCDS46778.1">
    <molecule id="Q96IV0-2"/>
</dbReference>
<dbReference type="CCDS" id="CCDS46779.1">
    <molecule id="Q96IV0-3"/>
</dbReference>
<dbReference type="RefSeq" id="NP_001138765.1">
    <molecule id="Q96IV0-2"/>
    <property type="nucleotide sequence ID" value="NM_001145293.2"/>
</dbReference>
<dbReference type="RefSeq" id="NP_001138766.1">
    <molecule id="Q96IV0-5"/>
    <property type="nucleotide sequence ID" value="NM_001145294.2"/>
</dbReference>
<dbReference type="RefSeq" id="NP_001138767.1">
    <molecule id="Q96IV0-3"/>
    <property type="nucleotide sequence ID" value="NM_001145295.2"/>
</dbReference>
<dbReference type="RefSeq" id="NP_060767.2">
    <molecule id="Q96IV0-1"/>
    <property type="nucleotide sequence ID" value="NM_018297.3"/>
</dbReference>
<dbReference type="PDB" id="2CCQ">
    <property type="method" value="X-ray"/>
    <property type="resolution" value="1.60 A"/>
    <property type="chains" value="A=11-109"/>
</dbReference>
<dbReference type="PDB" id="2CM0">
    <property type="method" value="X-ray"/>
    <property type="resolution" value="1.90 A"/>
    <property type="chains" value="A=11-109"/>
</dbReference>
<dbReference type="PDBsum" id="2CCQ"/>
<dbReference type="PDBsum" id="2CM0"/>
<dbReference type="SMR" id="Q96IV0"/>
<dbReference type="BioGRID" id="120885">
    <property type="interactions" value="92"/>
</dbReference>
<dbReference type="FunCoup" id="Q96IV0">
    <property type="interactions" value="4211"/>
</dbReference>
<dbReference type="IntAct" id="Q96IV0">
    <property type="interactions" value="50"/>
</dbReference>
<dbReference type="MINT" id="Q96IV0"/>
<dbReference type="STRING" id="9606.ENSP00000280700"/>
<dbReference type="BindingDB" id="Q96IV0"/>
<dbReference type="ChEMBL" id="CHEMBL4523429"/>
<dbReference type="DrugCentral" id="Q96IV0"/>
<dbReference type="GlyGen" id="Q96IV0">
    <property type="glycosylation" value="12 sites, 1 O-linked glycan (2 sites)"/>
</dbReference>
<dbReference type="iPTMnet" id="Q96IV0"/>
<dbReference type="PhosphoSitePlus" id="Q96IV0"/>
<dbReference type="SwissPalm" id="Q96IV0"/>
<dbReference type="BioMuta" id="NGLY1"/>
<dbReference type="DMDM" id="74732105"/>
<dbReference type="jPOST" id="Q96IV0"/>
<dbReference type="MassIVE" id="Q96IV0"/>
<dbReference type="PaxDb" id="9606-ENSP00000280700"/>
<dbReference type="PeptideAtlas" id="Q96IV0"/>
<dbReference type="ProteomicsDB" id="76857">
    <molecule id="Q96IV0-1"/>
</dbReference>
<dbReference type="ProteomicsDB" id="76858">
    <molecule id="Q96IV0-2"/>
</dbReference>
<dbReference type="ProteomicsDB" id="76859">
    <molecule id="Q96IV0-3"/>
</dbReference>
<dbReference type="ProteomicsDB" id="76860">
    <molecule id="Q96IV0-4"/>
</dbReference>
<dbReference type="ProteomicsDB" id="76861">
    <molecule id="Q96IV0-5"/>
</dbReference>
<dbReference type="Pumba" id="Q96IV0"/>
<dbReference type="Antibodypedia" id="27393">
    <property type="antibodies" value="48 antibodies from 17 providers"/>
</dbReference>
<dbReference type="DNASU" id="55768"/>
<dbReference type="Ensembl" id="ENST00000280700.10">
    <molecule id="Q96IV0-1"/>
    <property type="protein sequence ID" value="ENSP00000280700.5"/>
    <property type="gene ID" value="ENSG00000151092.18"/>
</dbReference>
<dbReference type="Ensembl" id="ENST00000396649.7">
    <molecule id="Q96IV0-3"/>
    <property type="protein sequence ID" value="ENSP00000379886.3"/>
    <property type="gene ID" value="ENSG00000151092.18"/>
</dbReference>
<dbReference type="Ensembl" id="ENST00000417874.6">
    <molecule id="Q96IV0-5"/>
    <property type="protein sequence ID" value="ENSP00000389888.2"/>
    <property type="gene ID" value="ENSG00000151092.18"/>
</dbReference>
<dbReference type="Ensembl" id="ENST00000428257.5">
    <molecule id="Q96IV0-2"/>
    <property type="protein sequence ID" value="ENSP00000387430.1"/>
    <property type="gene ID" value="ENSG00000151092.18"/>
</dbReference>
<dbReference type="GeneID" id="55768"/>
<dbReference type="KEGG" id="hsa:55768"/>
<dbReference type="MANE-Select" id="ENST00000280700.10">
    <property type="protein sequence ID" value="ENSP00000280700.5"/>
    <property type="RefSeq nucleotide sequence ID" value="NM_018297.4"/>
    <property type="RefSeq protein sequence ID" value="NP_060767.2"/>
</dbReference>
<dbReference type="UCSC" id="uc003cdl.4">
    <molecule id="Q96IV0-1"/>
    <property type="organism name" value="human"/>
</dbReference>
<dbReference type="AGR" id="HGNC:17646"/>
<dbReference type="CTD" id="55768"/>
<dbReference type="DisGeNET" id="55768"/>
<dbReference type="GeneCards" id="NGLY1"/>
<dbReference type="GeneReviews" id="NGLY1"/>
<dbReference type="HGNC" id="HGNC:17646">
    <property type="gene designation" value="NGLY1"/>
</dbReference>
<dbReference type="HPA" id="ENSG00000151092">
    <property type="expression patterns" value="Low tissue specificity"/>
</dbReference>
<dbReference type="MalaCards" id="NGLY1"/>
<dbReference type="MIM" id="610661">
    <property type="type" value="gene"/>
</dbReference>
<dbReference type="MIM" id="615273">
    <property type="type" value="phenotype"/>
</dbReference>
<dbReference type="neXtProt" id="NX_Q96IV0"/>
<dbReference type="OpenTargets" id="ENSG00000151092"/>
<dbReference type="Orphanet" id="404454">
    <property type="disease" value="Alacrimia-choreoathetosis-liver dysfunction syndrome"/>
</dbReference>
<dbReference type="PharmGKB" id="PA38462"/>
<dbReference type="VEuPathDB" id="HostDB:ENSG00000151092"/>
<dbReference type="eggNOG" id="KOG0909">
    <property type="taxonomic scope" value="Eukaryota"/>
</dbReference>
<dbReference type="GeneTree" id="ENSGT00390000006540"/>
<dbReference type="HOGENOM" id="CLU_030187_0_0_1"/>
<dbReference type="InParanoid" id="Q96IV0"/>
<dbReference type="OMA" id="ENHYCSQ"/>
<dbReference type="OrthoDB" id="409136at2759"/>
<dbReference type="PAN-GO" id="Q96IV0">
    <property type="GO annotations" value="6 GO annotations based on evolutionary models"/>
</dbReference>
<dbReference type="PhylomeDB" id="Q96IV0"/>
<dbReference type="TreeFam" id="TF315254"/>
<dbReference type="BRENDA" id="3.5.1.52">
    <property type="organism ID" value="2681"/>
</dbReference>
<dbReference type="PathwayCommons" id="Q96IV0"/>
<dbReference type="Reactome" id="R-HSA-532668">
    <property type="pathway name" value="N-glycan trimming in the ER and Calnexin/Calreticulin cycle"/>
</dbReference>
<dbReference type="SignaLink" id="Q96IV0"/>
<dbReference type="SIGNOR" id="Q96IV0"/>
<dbReference type="BioGRID-ORCS" id="55768">
    <property type="hits" value="89 hits in 1157 CRISPR screens"/>
</dbReference>
<dbReference type="ChiTaRS" id="NGLY1">
    <property type="organism name" value="human"/>
</dbReference>
<dbReference type="EvolutionaryTrace" id="Q96IV0"/>
<dbReference type="GeneWiki" id="NGLY1"/>
<dbReference type="GenomeRNAi" id="55768"/>
<dbReference type="Pharos" id="Q96IV0">
    <property type="development level" value="Tbio"/>
</dbReference>
<dbReference type="PRO" id="PR:Q96IV0"/>
<dbReference type="Proteomes" id="UP000005640">
    <property type="component" value="Chromosome 3"/>
</dbReference>
<dbReference type="RNAct" id="Q96IV0">
    <property type="molecule type" value="protein"/>
</dbReference>
<dbReference type="Bgee" id="ENSG00000151092">
    <property type="expression patterns" value="Expressed in sperm and 205 other cell types or tissues"/>
</dbReference>
<dbReference type="ExpressionAtlas" id="Q96IV0">
    <property type="expression patterns" value="baseline and differential"/>
</dbReference>
<dbReference type="GO" id="GO:0005737">
    <property type="term" value="C:cytoplasm"/>
    <property type="evidence" value="ECO:0000314"/>
    <property type="project" value="UniProtKB"/>
</dbReference>
<dbReference type="GO" id="GO:0005829">
    <property type="term" value="C:cytosol"/>
    <property type="evidence" value="ECO:0000318"/>
    <property type="project" value="GO_Central"/>
</dbReference>
<dbReference type="GO" id="GO:0005634">
    <property type="term" value="C:nucleus"/>
    <property type="evidence" value="ECO:0000318"/>
    <property type="project" value="GO_Central"/>
</dbReference>
<dbReference type="GO" id="GO:0046872">
    <property type="term" value="F:metal ion binding"/>
    <property type="evidence" value="ECO:0007669"/>
    <property type="project" value="UniProtKB-KW"/>
</dbReference>
<dbReference type="GO" id="GO:0000224">
    <property type="term" value="F:peptide-N4-(N-acetyl-beta-glucosaminyl)asparagine amidase activity"/>
    <property type="evidence" value="ECO:0000316"/>
    <property type="project" value="FlyBase"/>
</dbReference>
<dbReference type="GO" id="GO:0006516">
    <property type="term" value="P:glycoprotein catabolic process"/>
    <property type="evidence" value="ECO:0000314"/>
    <property type="project" value="UniProtKB"/>
</dbReference>
<dbReference type="GO" id="GO:0030513">
    <property type="term" value="P:positive regulation of BMP signaling pathway"/>
    <property type="evidence" value="ECO:0000318"/>
    <property type="project" value="GO_Central"/>
</dbReference>
<dbReference type="GO" id="GO:0006457">
    <property type="term" value="P:protein folding"/>
    <property type="evidence" value="ECO:0000304"/>
    <property type="project" value="Reactome"/>
</dbReference>
<dbReference type="CDD" id="cd10459">
    <property type="entry name" value="PUB_PNGase"/>
    <property type="match status" value="1"/>
</dbReference>
<dbReference type="FunFam" id="1.20.58.2190:FF:000006">
    <property type="entry name" value="N-glycanase 1"/>
    <property type="match status" value="1"/>
</dbReference>
<dbReference type="FunFam" id="2.20.25.10:FF:000011">
    <property type="entry name" value="peptide-N(4)-(N-acetyl-beta- glucosaminyl)asparagine amidase"/>
    <property type="match status" value="1"/>
</dbReference>
<dbReference type="FunFam" id="2.60.120.1020:FF:000001">
    <property type="entry name" value="Peptide-N(4)-(N-acetyl-beta-glucosaminyl)asparagine amidase"/>
    <property type="match status" value="1"/>
</dbReference>
<dbReference type="Gene3D" id="1.20.58.2190">
    <property type="match status" value="1"/>
</dbReference>
<dbReference type="Gene3D" id="2.20.25.10">
    <property type="match status" value="1"/>
</dbReference>
<dbReference type="Gene3D" id="3.10.620.30">
    <property type="match status" value="1"/>
</dbReference>
<dbReference type="Gene3D" id="2.60.120.1020">
    <property type="entry name" value="Peptide N glycanase, PAW domain"/>
    <property type="match status" value="1"/>
</dbReference>
<dbReference type="InterPro" id="IPR008979">
    <property type="entry name" value="Galactose-bd-like_sf"/>
</dbReference>
<dbReference type="InterPro" id="IPR038765">
    <property type="entry name" value="Papain-like_cys_pep_sf"/>
</dbReference>
<dbReference type="InterPro" id="IPR038680">
    <property type="entry name" value="PAW_sf"/>
</dbReference>
<dbReference type="InterPro" id="IPR006588">
    <property type="entry name" value="Peptide_N_glycanase_PAW_dom"/>
</dbReference>
<dbReference type="InterPro" id="IPR050883">
    <property type="entry name" value="PNGase"/>
</dbReference>
<dbReference type="InterPro" id="IPR036339">
    <property type="entry name" value="PUB-like_dom_sf"/>
</dbReference>
<dbReference type="InterPro" id="IPR018997">
    <property type="entry name" value="PUB_domain"/>
</dbReference>
<dbReference type="InterPro" id="IPR002931">
    <property type="entry name" value="Transglutaminase-like"/>
</dbReference>
<dbReference type="PANTHER" id="PTHR12143">
    <property type="entry name" value="PEPTIDE N-GLYCANASE PNGASE -RELATED"/>
    <property type="match status" value="1"/>
</dbReference>
<dbReference type="PANTHER" id="PTHR12143:SF19">
    <property type="entry name" value="PEPTIDE-N(4)-(N-ACETYL-BETA-GLUCOSAMINYL)ASPARAGINE AMIDASE"/>
    <property type="match status" value="1"/>
</dbReference>
<dbReference type="Pfam" id="PF04721">
    <property type="entry name" value="PAW"/>
    <property type="match status" value="1"/>
</dbReference>
<dbReference type="Pfam" id="PF09409">
    <property type="entry name" value="PUB"/>
    <property type="match status" value="1"/>
</dbReference>
<dbReference type="Pfam" id="PF01841">
    <property type="entry name" value="Transglut_core"/>
    <property type="match status" value="1"/>
</dbReference>
<dbReference type="SMART" id="SM00613">
    <property type="entry name" value="PAW"/>
    <property type="match status" value="1"/>
</dbReference>
<dbReference type="SMART" id="SM00580">
    <property type="entry name" value="PUG"/>
    <property type="match status" value="1"/>
</dbReference>
<dbReference type="SMART" id="SM00460">
    <property type="entry name" value="TGc"/>
    <property type="match status" value="1"/>
</dbReference>
<dbReference type="SUPFAM" id="SSF54001">
    <property type="entry name" value="Cysteine proteinases"/>
    <property type="match status" value="1"/>
</dbReference>
<dbReference type="SUPFAM" id="SSF49785">
    <property type="entry name" value="Galactose-binding domain-like"/>
    <property type="match status" value="1"/>
</dbReference>
<dbReference type="SUPFAM" id="SSF143503">
    <property type="entry name" value="PUG domain-like"/>
    <property type="match status" value="1"/>
</dbReference>
<dbReference type="PROSITE" id="PS51398">
    <property type="entry name" value="PAW"/>
    <property type="match status" value="1"/>
</dbReference>
<comment type="function">
    <text evidence="4 5">Specifically deglycosylates the denatured form of N-linked glycoproteins in the cytoplasm and assists their proteasome-mediated degradation. Cleaves the beta-aspartyl-glucosamine (GlcNAc) of the glycan and the amide side chain of Asn, converting Asn to Asp. Prefers proteins containing high-mannose over those bearing complex type oligosaccharides. Can recognize misfolded proteins in the endoplasmic reticulum that are exported to the cytosol to be destroyed and deglycosylate them, while it has no activity toward native proteins. Deglycosylation is a prerequisite for subsequent proteasome-mediated degradation of some, but not all, misfolded glycoproteins.</text>
</comment>
<comment type="catalytic activity">
    <reaction>
        <text>Hydrolysis of an N(4)-(acetyl-beta-D-glucosaminyl)asparagine residue in which the glucosamine residue may be further glycosylated, to yield a (substituted) N-acetyl-beta-D-glucosaminylamine and a peptide containing an aspartate residue.</text>
        <dbReference type="EC" id="3.5.1.52"/>
    </reaction>
</comment>
<comment type="cofactor">
    <cofactor evidence="1">
        <name>Zn(2+)</name>
        <dbReference type="ChEBI" id="CHEBI:29105"/>
    </cofactor>
    <text evidence="1">Binds 1 zinc ion per subunit.</text>
</comment>
<comment type="activity regulation">
    <text evidence="7">Inhibited by Z-VAD-fmk, a well-known caspase inhibitor, which inhibits enzyme activity through covalent binding of the carbohydrate to the single Cys-306 residue.</text>
</comment>
<comment type="subunit">
    <text evidence="5 6 8 9">Component of a complex required to couple retrotranslocation, ubiquitination and deglycosylation composed of NGLY1, SAKS1, AMFR, VCP and RAD23B. Interacts with the proteasome components RAD23B and PSMC1. Interacts with directly with VCP. Interacts with DERL1, bringing it close to the endoplasmic reticulum membrane. Interacts with SAKS1.</text>
</comment>
<comment type="interaction">
    <interactant intactId="EBI-6165879">
        <id>Q96IV0</id>
    </interactant>
    <interactant intactId="EBI-1012434">
        <id>Q6AI39</id>
        <label>BICRAL</label>
    </interactant>
    <organismsDiffer>false</organismsDiffer>
    <experiments>3</experiments>
</comment>
<comment type="interaction">
    <interactant intactId="EBI-6165879">
        <id>Q96IV0</id>
    </interactant>
    <interactant intactId="EBI-8293751">
        <id>Q96NT3</id>
        <label>GUCD1</label>
    </interactant>
    <organismsDiffer>false</organismsDiffer>
    <experiments>4</experiments>
</comment>
<comment type="interaction">
    <interactant intactId="EBI-6165879">
        <id>Q96IV0</id>
    </interactant>
    <interactant intactId="EBI-11978177">
        <id>Q96NT3-2</id>
        <label>GUCD1</label>
    </interactant>
    <organismsDiffer>false</organismsDiffer>
    <experiments>3</experiments>
</comment>
<comment type="interaction">
    <interactant intactId="EBI-6165879">
        <id>Q96IV0</id>
    </interactant>
    <interactant intactId="EBI-3932727">
        <id>Q99743</id>
        <label>NPAS2</label>
    </interactant>
    <organismsDiffer>false</organismsDiffer>
    <experiments>3</experiments>
</comment>
<comment type="interaction">
    <interactant intactId="EBI-6165879">
        <id>Q96IV0</id>
    </interactant>
    <interactant intactId="EBI-296331">
        <id>Q02548</id>
        <label>PAX5</label>
    </interactant>
    <organismsDiffer>false</organismsDiffer>
    <experiments>3</experiments>
</comment>
<comment type="interaction">
    <interactant intactId="EBI-6165879">
        <id>Q96IV0</id>
    </interactant>
    <interactant intactId="EBI-747278">
        <id>P26367</id>
        <label>PAX6</label>
    </interactant>
    <organismsDiffer>false</organismsDiffer>
    <experiments>3</experiments>
</comment>
<comment type="interaction">
    <interactant intactId="EBI-6165879">
        <id>Q96IV0</id>
    </interactant>
    <interactant intactId="EBI-746453">
        <id>P54725</id>
        <label>RAD23A</label>
    </interactant>
    <organismsDiffer>false</organismsDiffer>
    <experiments>13</experiments>
</comment>
<comment type="interaction">
    <interactant intactId="EBI-6165879">
        <id>Q96IV0</id>
    </interactant>
    <interactant intactId="EBI-954531">
        <id>P54727</id>
        <label>RAD23B</label>
    </interactant>
    <organismsDiffer>false</organismsDiffer>
    <experiments>13</experiments>
</comment>
<comment type="interaction">
    <interactant intactId="EBI-6165879">
        <id>Q96IV0</id>
    </interactant>
    <interactant intactId="EBI-11952764">
        <id>Q99081-3</id>
        <label>TCF12</label>
    </interactant>
    <organismsDiffer>false</organismsDiffer>
    <experiments>3</experiments>
</comment>
<comment type="interaction">
    <interactant intactId="EBI-6165879">
        <id>Q96IV0</id>
    </interactant>
    <interactant intactId="EBI-1396921">
        <id>O14545</id>
        <label>TRAFD1</label>
    </interactant>
    <organismsDiffer>false</organismsDiffer>
    <experiments>7</experiments>
</comment>
<comment type="interaction">
    <interactant intactId="EBI-6165879">
        <id>Q96IV0</id>
    </interactant>
    <interactant intactId="EBI-2130429">
        <id>Q9BYV2</id>
        <label>TRIM54</label>
    </interactant>
    <organismsDiffer>false</organismsDiffer>
    <experiments>7</experiments>
</comment>
<comment type="interaction">
    <interactant intactId="EBI-6165879">
        <id>Q96IV0</id>
    </interactant>
    <interactant intactId="EBI-741480">
        <id>Q9UMX0</id>
        <label>UBQLN1</label>
    </interactant>
    <organismsDiffer>false</organismsDiffer>
    <experiments>7</experiments>
</comment>
<comment type="interaction">
    <interactant intactId="EBI-6165879">
        <id>Q96IV0</id>
    </interactant>
    <interactant intactId="EBI-10173939">
        <id>Q9UMX0-2</id>
        <label>UBQLN1</label>
    </interactant>
    <organismsDiffer>false</organismsDiffer>
    <experiments>3</experiments>
</comment>
<comment type="interaction">
    <interactant intactId="EBI-6165879">
        <id>Q96IV0</id>
    </interactant>
    <interactant intactId="EBI-1993619">
        <id>Q14CS0</id>
        <label>UBXN2B</label>
    </interactant>
    <organismsDiffer>false</organismsDiffer>
    <experiments>7</experiments>
</comment>
<comment type="interaction">
    <interactant intactId="EBI-6165879">
        <id>Q96IV0</id>
    </interactant>
    <interactant intactId="EBI-2803134">
        <id>Q2NL98</id>
        <label>VMAC</label>
    </interactant>
    <organismsDiffer>false</organismsDiffer>
    <experiments>3</experiments>
</comment>
<comment type="subcellular location">
    <subcellularLocation>
        <location evidence="5">Cytoplasm</location>
    </subcellularLocation>
</comment>
<comment type="alternative products">
    <event type="alternative splicing"/>
    <isoform>
        <id>Q96IV0-1</id>
        <name>1</name>
        <sequence type="displayed"/>
    </isoform>
    <isoform>
        <id>Q96IV0-2</id>
        <name>2</name>
        <sequence type="described" ref="VSP_020344"/>
    </isoform>
    <isoform>
        <id>Q96IV0-3</id>
        <name>3</name>
        <sequence type="described" ref="VSP_020345 VSP_020346"/>
    </isoform>
    <isoform>
        <id>Q96IV0-4</id>
        <name>4</name>
        <sequence type="described" ref="VSP_020343"/>
    </isoform>
    <isoform>
        <id>Q96IV0-5</id>
        <name>5</name>
        <sequence type="described" ref="VSP_043501"/>
    </isoform>
</comment>
<comment type="domain">
    <text evidence="9">The PUB domain mediates the interaction with VCP.</text>
</comment>
<comment type="disease" evidence="10 11">
    <disease id="DI-03774">
        <name>Congenital disorder of deglycosylation 1</name>
        <acronym>CDDG1</acronym>
        <description>An autosomal recessive multisystem disorder characterized by developmental delay, hypotonia, abnormal involuntary movements and alacrima or poor tear production. Other features include microcephaly, intractable seizures, abnormal eye movements and evidence of liver dysfunction, probably due to cytoplasmic accumulation of storage material in vacuoles.</description>
        <dbReference type="MIM" id="615273"/>
    </disease>
    <text>The disease is caused by variants affecting the gene represented in this entry.</text>
</comment>
<comment type="miscellaneous">
    <text>In case of infection by cytomegaloviruses, it is not essential for degradation of MHC class I heavy chains.</text>
</comment>
<comment type="similarity">
    <text evidence="2">Belongs to the transglutaminase-like superfamily. PNGase family.</text>
</comment>
<comment type="sequence caution" evidence="15">
    <conflict type="erroneous termination">
        <sequence resource="EMBL-CDS" id="AAH17220"/>
    </conflict>
    <text>Truncated C-terminus.</text>
</comment>
<comment type="sequence caution" evidence="15">
    <conflict type="erroneous initiation">
        <sequence resource="EMBL-CDS" id="BAD92786"/>
    </conflict>
</comment>
<gene>
    <name type="primary">NGLY1</name>
    <name type="synonym">PNG1</name>
</gene>
<feature type="initiator methionine" description="Removed" evidence="16">
    <location>
        <position position="1"/>
    </location>
</feature>
<feature type="chain" id="PRO_0000248971" description="Peptide-N(4)-(N-acetyl-beta-glucosaminyl)asparagine amidase">
    <location>
        <begin position="2"/>
        <end position="654"/>
    </location>
</feature>
<feature type="domain" description="PUB">
    <location>
        <begin position="30"/>
        <end position="91"/>
    </location>
</feature>
<feature type="domain" description="PAW" evidence="2">
    <location>
        <begin position="454"/>
        <end position="654"/>
    </location>
</feature>
<feature type="region of interest" description="Disordered" evidence="3">
    <location>
        <begin position="112"/>
        <end position="163"/>
    </location>
</feature>
<feature type="compositionally biased region" description="Polar residues" evidence="3">
    <location>
        <begin position="124"/>
        <end position="163"/>
    </location>
</feature>
<feature type="active site" description="Nucleophile" evidence="1">
    <location>
        <position position="309"/>
    </location>
</feature>
<feature type="active site" evidence="1">
    <location>
        <position position="336"/>
    </location>
</feature>
<feature type="active site" evidence="1">
    <location>
        <position position="353"/>
    </location>
</feature>
<feature type="binding site" evidence="1">
    <location>
        <position position="250"/>
    </location>
    <ligand>
        <name>Zn(2+)</name>
        <dbReference type="ChEBI" id="CHEBI:29105"/>
    </ligand>
</feature>
<feature type="binding site" evidence="1">
    <location>
        <position position="253"/>
    </location>
    <ligand>
        <name>Zn(2+)</name>
        <dbReference type="ChEBI" id="CHEBI:29105"/>
    </ligand>
</feature>
<feature type="binding site" evidence="1">
    <location>
        <position position="283"/>
    </location>
    <ligand>
        <name>Zn(2+)</name>
        <dbReference type="ChEBI" id="CHEBI:29105"/>
    </ligand>
</feature>
<feature type="binding site" evidence="1">
    <location>
        <position position="286"/>
    </location>
    <ligand>
        <name>Zn(2+)</name>
        <dbReference type="ChEBI" id="CHEBI:29105"/>
    </ligand>
</feature>
<feature type="modified residue" description="N-acetylalanine" evidence="16">
    <location>
        <position position="2"/>
    </location>
</feature>
<feature type="modified residue" description="Phosphothreonine" evidence="17">
    <location>
        <position position="137"/>
    </location>
</feature>
<feature type="splice variant" id="VSP_020343" description="In isoform 4." evidence="14">
    <location>
        <begin position="1"/>
        <end position="523"/>
    </location>
</feature>
<feature type="splice variant" id="VSP_043501" description="In isoform 5." evidence="12">
    <original>MAAAALGSSSGSASPAVAELCQNTPETFLEASKLLLTYADNIL</original>
    <variation>M</variation>
    <location>
        <begin position="1"/>
        <end position="43"/>
    </location>
</feature>
<feature type="splice variant" id="VSP_020344" description="In isoform 2." evidence="13">
    <original>DHVWTEVYSPSQQRWLHCDACEDVCDKPLLYEIGWGKKLSYVIAFSKDE</original>
    <variation>ELQRTLSLKLTTLKEIGKTFLRISKRQKLIQ</variation>
    <location>
        <begin position="335"/>
        <end position="383"/>
    </location>
</feature>
<feature type="splice variant" id="VSP_020345" description="In isoform 3." evidence="13">
    <original>VYLARKEGSSFAYISWKFECG</original>
    <variation>ITVFTPMLIFLVPLKLFWKQN</variation>
    <location>
        <begin position="538"/>
        <end position="558"/>
    </location>
</feature>
<feature type="splice variant" id="VSP_020346" description="In isoform 3." evidence="13">
    <location>
        <begin position="559"/>
        <end position="654"/>
    </location>
</feature>
<feature type="sequence variant" id="VAR_027385" description="In dbSNP:rs7621398.">
    <original>V</original>
    <variation>I</variation>
    <location>
        <position position="581"/>
    </location>
</feature>
<feature type="sequence variant" id="VAR_027386" description="In dbSNP:rs7635089.">
    <original>Q</original>
    <variation>R</variation>
    <location>
        <position position="591"/>
    </location>
</feature>
<feature type="helix" evidence="18">
    <location>
        <begin position="15"/>
        <end position="20"/>
    </location>
</feature>
<feature type="helix" evidence="18">
    <location>
        <begin position="25"/>
        <end position="44"/>
    </location>
</feature>
<feature type="helix" evidence="18">
    <location>
        <begin position="49"/>
        <end position="52"/>
    </location>
</feature>
<feature type="strand" evidence="18">
    <location>
        <begin position="53"/>
        <end position="55"/>
    </location>
</feature>
<feature type="helix" evidence="18">
    <location>
        <begin position="59"/>
        <end position="64"/>
    </location>
</feature>
<feature type="turn" evidence="18">
    <location>
        <begin position="65"/>
        <end position="67"/>
    </location>
</feature>
<feature type="helix" evidence="18">
    <location>
        <begin position="71"/>
        <end position="78"/>
    </location>
</feature>
<feature type="strand" evidence="18">
    <location>
        <begin position="84"/>
        <end position="88"/>
    </location>
</feature>
<feature type="helix" evidence="18">
    <location>
        <begin position="95"/>
        <end position="106"/>
    </location>
</feature>
<evidence type="ECO:0000250" key="1"/>
<evidence type="ECO:0000255" key="2">
    <source>
        <dbReference type="PROSITE-ProRule" id="PRU00731"/>
    </source>
</evidence>
<evidence type="ECO:0000256" key="3">
    <source>
        <dbReference type="SAM" id="MobiDB-lite"/>
    </source>
</evidence>
<evidence type="ECO:0000269" key="4">
    <source>
    </source>
</evidence>
<evidence type="ECO:0000269" key="5">
    <source>
    </source>
</evidence>
<evidence type="ECO:0000269" key="6">
    <source>
    </source>
</evidence>
<evidence type="ECO:0000269" key="7">
    <source>
    </source>
</evidence>
<evidence type="ECO:0000269" key="8">
    <source>
    </source>
</evidence>
<evidence type="ECO:0000269" key="9">
    <source>
    </source>
</evidence>
<evidence type="ECO:0000269" key="10">
    <source>
    </source>
</evidence>
<evidence type="ECO:0000269" key="11">
    <source>
    </source>
</evidence>
<evidence type="ECO:0000303" key="12">
    <source>
    </source>
</evidence>
<evidence type="ECO:0000303" key="13">
    <source>
    </source>
</evidence>
<evidence type="ECO:0000303" key="14">
    <source ref="3"/>
</evidence>
<evidence type="ECO:0000305" key="15"/>
<evidence type="ECO:0007744" key="16">
    <source>
    </source>
</evidence>
<evidence type="ECO:0007744" key="17">
    <source>
    </source>
</evidence>
<evidence type="ECO:0007829" key="18">
    <source>
        <dbReference type="PDB" id="2CCQ"/>
    </source>
</evidence>
<keyword id="KW-0002">3D-structure</keyword>
<keyword id="KW-0007">Acetylation</keyword>
<keyword id="KW-0025">Alternative splicing</keyword>
<keyword id="KW-0963">Cytoplasm</keyword>
<keyword id="KW-0378">Hydrolase</keyword>
<keyword id="KW-0479">Metal-binding</keyword>
<keyword id="KW-0597">Phosphoprotein</keyword>
<keyword id="KW-1267">Proteomics identification</keyword>
<keyword id="KW-1185">Reference proteome</keyword>
<keyword id="KW-0862">Zinc</keyword>
<reference key="1">
    <citation type="journal article" date="2000" name="J. Cell Biol.">
        <title>PNG1, a yeast gene encoding a highly conserved peptide:N-glycanase.</title>
        <authorList>
            <person name="Suzuki T."/>
            <person name="Park H."/>
            <person name="Hollingsworth N.M."/>
            <person name="Sternglanz R."/>
            <person name="Lennarz W.J."/>
        </authorList>
    </citation>
    <scope>NUCLEOTIDE SEQUENCE [MRNA] (ISOFORM 1)</scope>
</reference>
<reference key="2">
    <citation type="journal article" date="2004" name="Nat. Genet.">
        <title>Complete sequencing and characterization of 21,243 full-length human cDNAs.</title>
        <authorList>
            <person name="Ota T."/>
            <person name="Suzuki Y."/>
            <person name="Nishikawa T."/>
            <person name="Otsuki T."/>
            <person name="Sugiyama T."/>
            <person name="Irie R."/>
            <person name="Wakamatsu A."/>
            <person name="Hayashi K."/>
            <person name="Sato H."/>
            <person name="Nagai K."/>
            <person name="Kimura K."/>
            <person name="Makita H."/>
            <person name="Sekine M."/>
            <person name="Obayashi M."/>
            <person name="Nishi T."/>
            <person name="Shibahara T."/>
            <person name="Tanaka T."/>
            <person name="Ishii S."/>
            <person name="Yamamoto J."/>
            <person name="Saito K."/>
            <person name="Kawai Y."/>
            <person name="Isono Y."/>
            <person name="Nakamura Y."/>
            <person name="Nagahari K."/>
            <person name="Murakami K."/>
            <person name="Yasuda T."/>
            <person name="Iwayanagi T."/>
            <person name="Wagatsuma M."/>
            <person name="Shiratori A."/>
            <person name="Sudo H."/>
            <person name="Hosoiri T."/>
            <person name="Kaku Y."/>
            <person name="Kodaira H."/>
            <person name="Kondo H."/>
            <person name="Sugawara M."/>
            <person name="Takahashi M."/>
            <person name="Kanda K."/>
            <person name="Yokoi T."/>
            <person name="Furuya T."/>
            <person name="Kikkawa E."/>
            <person name="Omura Y."/>
            <person name="Abe K."/>
            <person name="Kamihara K."/>
            <person name="Katsuta N."/>
            <person name="Sato K."/>
            <person name="Tanikawa M."/>
            <person name="Yamazaki M."/>
            <person name="Ninomiya K."/>
            <person name="Ishibashi T."/>
            <person name="Yamashita H."/>
            <person name="Murakawa K."/>
            <person name="Fujimori K."/>
            <person name="Tanai H."/>
            <person name="Kimata M."/>
            <person name="Watanabe M."/>
            <person name="Hiraoka S."/>
            <person name="Chiba Y."/>
            <person name="Ishida S."/>
            <person name="Ono Y."/>
            <person name="Takiguchi S."/>
            <person name="Watanabe S."/>
            <person name="Yosida M."/>
            <person name="Hotuta T."/>
            <person name="Kusano J."/>
            <person name="Kanehori K."/>
            <person name="Takahashi-Fujii A."/>
            <person name="Hara H."/>
            <person name="Tanase T.-O."/>
            <person name="Nomura Y."/>
            <person name="Togiya S."/>
            <person name="Komai F."/>
            <person name="Hara R."/>
            <person name="Takeuchi K."/>
            <person name="Arita M."/>
            <person name="Imose N."/>
            <person name="Musashino K."/>
            <person name="Yuuki H."/>
            <person name="Oshima A."/>
            <person name="Sasaki N."/>
            <person name="Aotsuka S."/>
            <person name="Yoshikawa Y."/>
            <person name="Matsunawa H."/>
            <person name="Ichihara T."/>
            <person name="Shiohata N."/>
            <person name="Sano S."/>
            <person name="Moriya S."/>
            <person name="Momiyama H."/>
            <person name="Satoh N."/>
            <person name="Takami S."/>
            <person name="Terashima Y."/>
            <person name="Suzuki O."/>
            <person name="Nakagawa S."/>
            <person name="Senoh A."/>
            <person name="Mizoguchi H."/>
            <person name="Goto Y."/>
            <person name="Shimizu F."/>
            <person name="Wakebe H."/>
            <person name="Hishigaki H."/>
            <person name="Watanabe T."/>
            <person name="Sugiyama A."/>
            <person name="Takemoto M."/>
            <person name="Kawakami B."/>
            <person name="Yamazaki M."/>
            <person name="Watanabe K."/>
            <person name="Kumagai A."/>
            <person name="Itakura S."/>
            <person name="Fukuzumi Y."/>
            <person name="Fujimori Y."/>
            <person name="Komiyama M."/>
            <person name="Tashiro H."/>
            <person name="Tanigami A."/>
            <person name="Fujiwara T."/>
            <person name="Ono T."/>
            <person name="Yamada K."/>
            <person name="Fujii Y."/>
            <person name="Ozaki K."/>
            <person name="Hirao M."/>
            <person name="Ohmori Y."/>
            <person name="Kawabata A."/>
            <person name="Hikiji T."/>
            <person name="Kobatake N."/>
            <person name="Inagaki H."/>
            <person name="Ikema Y."/>
            <person name="Okamoto S."/>
            <person name="Okitani R."/>
            <person name="Kawakami T."/>
            <person name="Noguchi S."/>
            <person name="Itoh T."/>
            <person name="Shigeta K."/>
            <person name="Senba T."/>
            <person name="Matsumura K."/>
            <person name="Nakajima Y."/>
            <person name="Mizuno T."/>
            <person name="Morinaga M."/>
            <person name="Sasaki M."/>
            <person name="Togashi T."/>
            <person name="Oyama M."/>
            <person name="Hata H."/>
            <person name="Watanabe M."/>
            <person name="Komatsu T."/>
            <person name="Mizushima-Sugano J."/>
            <person name="Satoh T."/>
            <person name="Shirai Y."/>
            <person name="Takahashi Y."/>
            <person name="Nakagawa K."/>
            <person name="Okumura K."/>
            <person name="Nagase T."/>
            <person name="Nomura N."/>
            <person name="Kikuchi H."/>
            <person name="Masuho Y."/>
            <person name="Yamashita R."/>
            <person name="Nakai K."/>
            <person name="Yada T."/>
            <person name="Nakamura Y."/>
            <person name="Ohara O."/>
            <person name="Isogai T."/>
            <person name="Sugano S."/>
        </authorList>
    </citation>
    <scope>NUCLEOTIDE SEQUENCE [LARGE SCALE MRNA] (ISOFORM 5)</scope>
    <source>
        <tissue>Subthalamic nucleus</tissue>
    </source>
</reference>
<reference key="3">
    <citation type="submission" date="2005-03" db="EMBL/GenBank/DDBJ databases">
        <authorList>
            <person name="Totoki Y."/>
            <person name="Toyoda A."/>
            <person name="Takeda T."/>
            <person name="Sakaki Y."/>
            <person name="Tanaka A."/>
            <person name="Yokoyama S."/>
            <person name="Ohara O."/>
            <person name="Nagase T."/>
            <person name="Kikuno R.F."/>
        </authorList>
    </citation>
    <scope>NUCLEOTIDE SEQUENCE [LARGE SCALE MRNA] (ISOFORM 4)</scope>
    <source>
        <tissue>Brain</tissue>
    </source>
</reference>
<reference key="4">
    <citation type="journal article" date="2006" name="Nature">
        <title>The DNA sequence, annotation and analysis of human chromosome 3.</title>
        <authorList>
            <person name="Muzny D.M."/>
            <person name="Scherer S.E."/>
            <person name="Kaul R."/>
            <person name="Wang J."/>
            <person name="Yu J."/>
            <person name="Sudbrak R."/>
            <person name="Buhay C.J."/>
            <person name="Chen R."/>
            <person name="Cree A."/>
            <person name="Ding Y."/>
            <person name="Dugan-Rocha S."/>
            <person name="Gill R."/>
            <person name="Gunaratne P."/>
            <person name="Harris R.A."/>
            <person name="Hawes A.C."/>
            <person name="Hernandez J."/>
            <person name="Hodgson A.V."/>
            <person name="Hume J."/>
            <person name="Jackson A."/>
            <person name="Khan Z.M."/>
            <person name="Kovar-Smith C."/>
            <person name="Lewis L.R."/>
            <person name="Lozado R.J."/>
            <person name="Metzker M.L."/>
            <person name="Milosavljevic A."/>
            <person name="Miner G.R."/>
            <person name="Morgan M.B."/>
            <person name="Nazareth L.V."/>
            <person name="Scott G."/>
            <person name="Sodergren E."/>
            <person name="Song X.-Z."/>
            <person name="Steffen D."/>
            <person name="Wei S."/>
            <person name="Wheeler D.A."/>
            <person name="Wright M.W."/>
            <person name="Worley K.C."/>
            <person name="Yuan Y."/>
            <person name="Zhang Z."/>
            <person name="Adams C.Q."/>
            <person name="Ansari-Lari M.A."/>
            <person name="Ayele M."/>
            <person name="Brown M.J."/>
            <person name="Chen G."/>
            <person name="Chen Z."/>
            <person name="Clendenning J."/>
            <person name="Clerc-Blankenburg K.P."/>
            <person name="Chen R."/>
            <person name="Chen Z."/>
            <person name="Davis C."/>
            <person name="Delgado O."/>
            <person name="Dinh H.H."/>
            <person name="Dong W."/>
            <person name="Draper H."/>
            <person name="Ernst S."/>
            <person name="Fu G."/>
            <person name="Gonzalez-Garay M.L."/>
            <person name="Garcia D.K."/>
            <person name="Gillett W."/>
            <person name="Gu J."/>
            <person name="Hao B."/>
            <person name="Haugen E."/>
            <person name="Havlak P."/>
            <person name="He X."/>
            <person name="Hennig S."/>
            <person name="Hu S."/>
            <person name="Huang W."/>
            <person name="Jackson L.R."/>
            <person name="Jacob L.S."/>
            <person name="Kelly S.H."/>
            <person name="Kube M."/>
            <person name="Levy R."/>
            <person name="Li Z."/>
            <person name="Liu B."/>
            <person name="Liu J."/>
            <person name="Liu W."/>
            <person name="Lu J."/>
            <person name="Maheshwari M."/>
            <person name="Nguyen B.-V."/>
            <person name="Okwuonu G.O."/>
            <person name="Palmeiri A."/>
            <person name="Pasternak S."/>
            <person name="Perez L.M."/>
            <person name="Phelps K.A."/>
            <person name="Plopper F.J."/>
            <person name="Qiang B."/>
            <person name="Raymond C."/>
            <person name="Rodriguez R."/>
            <person name="Saenphimmachak C."/>
            <person name="Santibanez J."/>
            <person name="Shen H."/>
            <person name="Shen Y."/>
            <person name="Subramanian S."/>
            <person name="Tabor P.E."/>
            <person name="Verduzco D."/>
            <person name="Waldron L."/>
            <person name="Wang J."/>
            <person name="Wang J."/>
            <person name="Wang Q."/>
            <person name="Williams G.A."/>
            <person name="Wong G.K.-S."/>
            <person name="Yao Z."/>
            <person name="Zhang J."/>
            <person name="Zhang X."/>
            <person name="Zhao G."/>
            <person name="Zhou J."/>
            <person name="Zhou Y."/>
            <person name="Nelson D."/>
            <person name="Lehrach H."/>
            <person name="Reinhardt R."/>
            <person name="Naylor S.L."/>
            <person name="Yang H."/>
            <person name="Olson M."/>
            <person name="Weinstock G."/>
            <person name="Gibbs R.A."/>
        </authorList>
    </citation>
    <scope>NUCLEOTIDE SEQUENCE [LARGE SCALE GENOMIC DNA]</scope>
</reference>
<reference key="5">
    <citation type="journal article" date="2004" name="Genome Res.">
        <title>The status, quality, and expansion of the NIH full-length cDNA project: the Mammalian Gene Collection (MGC).</title>
        <authorList>
            <consortium name="The MGC Project Team"/>
        </authorList>
    </citation>
    <scope>NUCLEOTIDE SEQUENCE [LARGE SCALE MRNA] (ISOFORMS 1 AND 3)</scope>
    <scope>NUCLEOTIDE SEQUENCE [LARGE SCALE MRNA] OF 4-654 (ISOFORM 2)</scope>
    <source>
        <tissue>Lymph</tissue>
        <tissue>Placenta</tissue>
        <tissue>Uterus</tissue>
    </source>
</reference>
<reference key="6">
    <citation type="journal article" date="2004" name="Biochem. J.">
        <title>A novel UBA and UBX domain protein that binds polyubiquitin and VCP and is a substrate for SAPKs.</title>
        <authorList>
            <person name="McNeill H."/>
            <person name="Knebel A."/>
            <person name="Arthur J.S."/>
            <person name="Cuenda A."/>
            <person name="Cohen P."/>
        </authorList>
    </citation>
    <scope>INTERACTION WITH VCP</scope>
</reference>
<reference key="7">
    <citation type="journal article" date="2004" name="EMBO J.">
        <title>A glycosylated type I membrane protein becomes cytosolic when peptide: N-glycanase is compromised.</title>
        <authorList>
            <person name="Blom D."/>
            <person name="Hirsch C."/>
            <person name="Stern P."/>
            <person name="Tortorella D."/>
            <person name="Ploegh H.L."/>
        </authorList>
    </citation>
    <scope>FUNCTION</scope>
</reference>
<reference key="8">
    <citation type="journal article" date="2004" name="Proc. Natl. Acad. Sci. U.S.A.">
        <title>A complex between peptide:N-glycanase and two proteasome-linked proteins suggests a mechanism for the degradation of misfolded glycoproteins.</title>
        <authorList>
            <person name="Katiyar S."/>
            <person name="Li G."/>
            <person name="Lennarz W.J."/>
        </authorList>
    </citation>
    <scope>FUNCTION</scope>
    <scope>SUBCELLULAR LOCATION</scope>
    <scope>INTERACTION WITH RAD23B AND PSMC1</scope>
</reference>
<reference key="9">
    <citation type="journal article" date="2004" name="Chem. Biol.">
        <title>Using a small molecule inhibitor of peptide: N-glycanase to probe its role in glycoprotein turnover.</title>
        <authorList>
            <person name="Misaghi S."/>
            <person name="Pacold M.E."/>
            <person name="Blom D."/>
            <person name="Ploegh H.L."/>
            <person name="Korbel G.A."/>
        </authorList>
    </citation>
    <scope>ACTIVITY REGULATION</scope>
</reference>
<reference key="10">
    <citation type="journal article" date="2005" name="Mol. Biol. Cell">
        <title>The retrotranslocation protein derlin-1 binds peptide:N-glycanase to the endoplasmic reticulum.</title>
        <authorList>
            <person name="Katiyar S."/>
            <person name="Joshi S."/>
            <person name="Lennarz W.J."/>
        </authorList>
    </citation>
    <scope>INTERACTION WITH DERL1</scope>
</reference>
<reference key="11">
    <citation type="journal article" date="2009" name="Anal. Chem.">
        <title>Lys-N and trypsin cover complementary parts of the phosphoproteome in a refined SCX-based approach.</title>
        <authorList>
            <person name="Gauci S."/>
            <person name="Helbig A.O."/>
            <person name="Slijper M."/>
            <person name="Krijgsveld J."/>
            <person name="Heck A.J."/>
            <person name="Mohammed S."/>
        </authorList>
    </citation>
    <scope>ACETYLATION [LARGE SCALE ANALYSIS] AT ALA-2</scope>
    <scope>CLEAVAGE OF INITIATOR METHIONINE [LARGE SCALE ANALYSIS]</scope>
    <scope>IDENTIFICATION BY MASS SPECTROMETRY [LARGE SCALE ANALYSIS]</scope>
</reference>
<reference key="12">
    <citation type="journal article" date="2012" name="J. Med. Genet.">
        <title>Clinical application of exome sequencing in undiagnosed genetic conditions.</title>
        <authorList>
            <person name="Need A.C."/>
            <person name="Shashi V."/>
            <person name="Hitomi Y."/>
            <person name="Schoch K."/>
            <person name="Shianna K.V."/>
            <person name="McDonald M.T."/>
            <person name="Meisler M.H."/>
            <person name="Goldstein D.B."/>
        </authorList>
    </citation>
    <scope>INVOLVEMENT IN CDDG1</scope>
</reference>
<reference key="13">
    <citation type="journal article" date="2013" name="J. Proteome Res.">
        <title>Toward a comprehensive characterization of a human cancer cell phosphoproteome.</title>
        <authorList>
            <person name="Zhou H."/>
            <person name="Di Palma S."/>
            <person name="Preisinger C."/>
            <person name="Peng M."/>
            <person name="Polat A.N."/>
            <person name="Heck A.J."/>
            <person name="Mohammed S."/>
        </authorList>
    </citation>
    <scope>PHOSPHORYLATION [LARGE SCALE ANALYSIS] AT THR-137</scope>
    <scope>IDENTIFICATION BY MASS SPECTROMETRY [LARGE SCALE ANALYSIS]</scope>
    <source>
        <tissue>Erythroleukemia</tissue>
    </source>
</reference>
<reference key="14">
    <citation type="journal article" date="2014" name="Genet. Med.">
        <title>Mutations in NGLY1 cause an inherited disorder of the endoplasmic reticulum-associated degradation pathway.</title>
        <authorList>
            <person name="Enns G.M."/>
            <person name="Shashi V."/>
            <person name="Bainbridge M."/>
            <person name="Gambello M.J."/>
            <person name="Zahir F.R."/>
            <person name="Bast T."/>
            <person name="Crimian R."/>
            <person name="Schoch K."/>
            <person name="Platt J."/>
            <person name="Cox R."/>
            <person name="Bernstein J.A."/>
            <person name="Scavina M."/>
            <person name="Walter R.S."/>
            <person name="Bibb A."/>
            <person name="Jones M."/>
            <person name="Hegde M."/>
            <person name="Graham B.H."/>
            <person name="Need A.C."/>
            <person name="Oviedo A."/>
            <person name="Schaaf C.P."/>
            <person name="Boyle S."/>
            <person name="Butte A.J."/>
            <person name="Chen R."/>
            <person name="Clark M.J."/>
            <person name="Haraksingh R."/>
            <person name="Cowan T.M."/>
            <person name="He P."/>
            <person name="Langlois S."/>
            <person name="Zoghbi H.Y."/>
            <person name="Snyder M."/>
            <person name="Gibbs R.A."/>
            <person name="Freeze H.H."/>
            <person name="Goldstein D.B."/>
        </authorList>
    </citation>
    <scope>INVOLVEMENT IN CDDG1</scope>
</reference>
<reference key="15">
    <citation type="journal article" date="2006" name="J. Biol. Chem.">
        <title>The PUB domain functions as a p97 binding module in human peptide N-glycanase.</title>
        <authorList>
            <person name="Allen M.D."/>
            <person name="Buchberger A."/>
            <person name="Bycroft M."/>
        </authorList>
    </citation>
    <scope>X-RAY CRYSTALLOGRAPHY (1.6 ANGSTROMS) OF 11-109 IN COMPLEX WITH VCP</scope>
    <scope>DOMAIN</scope>
</reference>
<name>NGLY1_HUMAN</name>
<proteinExistence type="evidence at protein level"/>